<name>Y346_STRTD</name>
<protein>
    <recommendedName>
        <fullName evidence="1">UPF0397 protein STER_0346</fullName>
    </recommendedName>
</protein>
<proteinExistence type="inferred from homology"/>
<dbReference type="EMBL" id="CP000419">
    <property type="protein sequence ID" value="ABJ65649.1"/>
    <property type="molecule type" value="Genomic_DNA"/>
</dbReference>
<dbReference type="RefSeq" id="WP_011680731.1">
    <property type="nucleotide sequence ID" value="NC_008532.1"/>
</dbReference>
<dbReference type="KEGG" id="ste:STER_0346"/>
<dbReference type="HOGENOM" id="CLU_120023_0_0_9"/>
<dbReference type="GO" id="GO:0005886">
    <property type="term" value="C:plasma membrane"/>
    <property type="evidence" value="ECO:0007669"/>
    <property type="project" value="UniProtKB-SubCell"/>
</dbReference>
<dbReference type="Gene3D" id="1.10.1760.20">
    <property type="match status" value="1"/>
</dbReference>
<dbReference type="HAMAP" id="MF_01572">
    <property type="entry name" value="UPF0397"/>
    <property type="match status" value="1"/>
</dbReference>
<dbReference type="InterPro" id="IPR009825">
    <property type="entry name" value="ECF_substrate-spec-like"/>
</dbReference>
<dbReference type="InterPro" id="IPR022914">
    <property type="entry name" value="UPF0397"/>
</dbReference>
<dbReference type="NCBIfam" id="NF010182">
    <property type="entry name" value="PRK13661.1"/>
    <property type="match status" value="1"/>
</dbReference>
<dbReference type="PANTHER" id="PTHR37815">
    <property type="entry name" value="UPF0397 PROTEIN BC_2624-RELATED"/>
    <property type="match status" value="1"/>
</dbReference>
<dbReference type="PANTHER" id="PTHR37815:SF3">
    <property type="entry name" value="UPF0397 PROTEIN SPR0429"/>
    <property type="match status" value="1"/>
</dbReference>
<dbReference type="Pfam" id="PF07155">
    <property type="entry name" value="ECF-ribofla_trS"/>
    <property type="match status" value="1"/>
</dbReference>
<feature type="chain" id="PRO_1000069205" description="UPF0397 protein STER_0346">
    <location>
        <begin position="1"/>
        <end position="181"/>
    </location>
</feature>
<feature type="transmembrane region" description="Helical" evidence="1">
    <location>
        <begin position="11"/>
        <end position="31"/>
    </location>
</feature>
<feature type="transmembrane region" description="Helical" evidence="1">
    <location>
        <begin position="45"/>
        <end position="65"/>
    </location>
</feature>
<feature type="transmembrane region" description="Helical" evidence="1">
    <location>
        <begin position="72"/>
        <end position="92"/>
    </location>
</feature>
<feature type="transmembrane region" description="Helical" evidence="1">
    <location>
        <begin position="109"/>
        <end position="129"/>
    </location>
</feature>
<feature type="transmembrane region" description="Helical" evidence="1">
    <location>
        <begin position="147"/>
        <end position="167"/>
    </location>
</feature>
<reference key="1">
    <citation type="journal article" date="2006" name="Proc. Natl. Acad. Sci. U.S.A.">
        <title>Comparative genomics of the lactic acid bacteria.</title>
        <authorList>
            <person name="Makarova K.S."/>
            <person name="Slesarev A."/>
            <person name="Wolf Y.I."/>
            <person name="Sorokin A."/>
            <person name="Mirkin B."/>
            <person name="Koonin E.V."/>
            <person name="Pavlov A."/>
            <person name="Pavlova N."/>
            <person name="Karamychev V."/>
            <person name="Polouchine N."/>
            <person name="Shakhova V."/>
            <person name="Grigoriev I."/>
            <person name="Lou Y."/>
            <person name="Rohksar D."/>
            <person name="Lucas S."/>
            <person name="Huang K."/>
            <person name="Goodstein D.M."/>
            <person name="Hawkins T."/>
            <person name="Plengvidhya V."/>
            <person name="Welker D."/>
            <person name="Hughes J."/>
            <person name="Goh Y."/>
            <person name="Benson A."/>
            <person name="Baldwin K."/>
            <person name="Lee J.-H."/>
            <person name="Diaz-Muniz I."/>
            <person name="Dosti B."/>
            <person name="Smeianov V."/>
            <person name="Wechter W."/>
            <person name="Barabote R."/>
            <person name="Lorca G."/>
            <person name="Altermann E."/>
            <person name="Barrangou R."/>
            <person name="Ganesan B."/>
            <person name="Xie Y."/>
            <person name="Rawsthorne H."/>
            <person name="Tamir D."/>
            <person name="Parker C."/>
            <person name="Breidt F."/>
            <person name="Broadbent J.R."/>
            <person name="Hutkins R."/>
            <person name="O'Sullivan D."/>
            <person name="Steele J."/>
            <person name="Unlu G."/>
            <person name="Saier M.H. Jr."/>
            <person name="Klaenhammer T."/>
            <person name="Richardson P."/>
            <person name="Kozyavkin S."/>
            <person name="Weimer B.C."/>
            <person name="Mills D.A."/>
        </authorList>
    </citation>
    <scope>NUCLEOTIDE SEQUENCE [LARGE SCALE GENOMIC DNA]</scope>
    <source>
        <strain>ATCC BAA-491 / LMD-9</strain>
    </source>
</reference>
<accession>Q03MC3</accession>
<comment type="subcellular location">
    <subcellularLocation>
        <location evidence="1">Cell membrane</location>
        <topology evidence="1">Multi-pass membrane protein</topology>
    </subcellularLocation>
</comment>
<comment type="similarity">
    <text evidence="1">Belongs to the UPF0397 family.</text>
</comment>
<keyword id="KW-1003">Cell membrane</keyword>
<keyword id="KW-0472">Membrane</keyword>
<keyword id="KW-0812">Transmembrane</keyword>
<keyword id="KW-1133">Transmembrane helix</keyword>
<evidence type="ECO:0000255" key="1">
    <source>
        <dbReference type="HAMAP-Rule" id="MF_01572"/>
    </source>
</evidence>
<organism>
    <name type="scientific">Streptococcus thermophilus (strain ATCC BAA-491 / LMD-9)</name>
    <dbReference type="NCBI Taxonomy" id="322159"/>
    <lineage>
        <taxon>Bacteria</taxon>
        <taxon>Bacillati</taxon>
        <taxon>Bacillota</taxon>
        <taxon>Bacilli</taxon>
        <taxon>Lactobacillales</taxon>
        <taxon>Streptococcaceae</taxon>
        <taxon>Streptococcus</taxon>
    </lineage>
</organism>
<gene>
    <name type="ordered locus">STER_0346</name>
</gene>
<sequence length="181" mass="19341">MKNNSIRTVVATGIGAALFIIIGMFVNIPIFGNTSIQLQYAVQALFSVIFGPITGFFMGFIGHALKDGIQYGNISWAWVLASGITGLVIGLFGKKYDVTMGKFSVMSMIWFNLAQALGLLIGYGVVTPIGDKIQFAQAWSYLYAQSFVAGVANFITIAIGGTLLLAIYASSRTQSGSLTKD</sequence>